<dbReference type="EMBL" id="X06157">
    <property type="protein sequence ID" value="CAA29514.1"/>
    <property type="molecule type" value="Genomic_DNA"/>
</dbReference>
<dbReference type="PIR" id="S00656">
    <property type="entry name" value="S00656"/>
</dbReference>
<dbReference type="SMR" id="P05715"/>
<dbReference type="GeneID" id="11262843"/>
<dbReference type="OMA" id="WAFAAMF"/>
<dbReference type="GO" id="GO:0016020">
    <property type="term" value="C:membrane"/>
    <property type="evidence" value="ECO:0007669"/>
    <property type="project" value="InterPro"/>
</dbReference>
<dbReference type="GO" id="GO:0022857">
    <property type="term" value="F:transmembrane transporter activity"/>
    <property type="evidence" value="ECO:0007669"/>
    <property type="project" value="InterPro"/>
</dbReference>
<dbReference type="CDD" id="cd17353">
    <property type="entry name" value="MFS_OFA_like"/>
    <property type="match status" value="1"/>
</dbReference>
<dbReference type="Gene3D" id="1.20.1250.20">
    <property type="entry name" value="MFS general substrate transporter like domains"/>
    <property type="match status" value="2"/>
</dbReference>
<dbReference type="InterPro" id="IPR011701">
    <property type="entry name" value="MFS"/>
</dbReference>
<dbReference type="InterPro" id="IPR020846">
    <property type="entry name" value="MFS_dom"/>
</dbReference>
<dbReference type="InterPro" id="IPR036259">
    <property type="entry name" value="MFS_trans_sf"/>
</dbReference>
<dbReference type="InterPro" id="IPR004741">
    <property type="entry name" value="Oxa_For_antiport_fam_transptr"/>
</dbReference>
<dbReference type="InterPro" id="IPR050327">
    <property type="entry name" value="Proton-linked_MCT"/>
</dbReference>
<dbReference type="NCBIfam" id="TIGR00890">
    <property type="entry name" value="2A0111"/>
    <property type="match status" value="1"/>
</dbReference>
<dbReference type="PANTHER" id="PTHR11360:SF304">
    <property type="entry name" value="MFS DOMAIN-CONTAINING PROTEIN"/>
    <property type="match status" value="1"/>
</dbReference>
<dbReference type="PANTHER" id="PTHR11360">
    <property type="entry name" value="MONOCARBOXYLATE TRANSPORTER"/>
    <property type="match status" value="1"/>
</dbReference>
<dbReference type="Pfam" id="PF07690">
    <property type="entry name" value="MFS_1"/>
    <property type="match status" value="1"/>
</dbReference>
<dbReference type="SUPFAM" id="SSF103473">
    <property type="entry name" value="MFS general substrate transporter"/>
    <property type="match status" value="1"/>
</dbReference>
<dbReference type="PROSITE" id="PS50850">
    <property type="entry name" value="MFS"/>
    <property type="match status" value="1"/>
</dbReference>
<proteinExistence type="predicted"/>
<protein>
    <recommendedName>
        <fullName>Uncharacterized 38 kDa protein in 23S RNA operon</fullName>
    </recommendedName>
</protein>
<feature type="chain" id="PRO_0000066088" description="Uncharacterized 38 kDa protein in 23S RNA operon">
    <location>
        <begin position="1"/>
        <end position="373"/>
    </location>
</feature>
<reference key="1">
    <citation type="journal article" date="1987" name="Nucleic Acids Res.">
        <title>Gene organization, transcription signals and processing of the single ribosomal RNA operon of the archaebacterium Thermoproteus tenax.</title>
        <authorList>
            <person name="Kjems J."/>
            <person name="Leffers H."/>
            <person name="Garrett R.A."/>
            <person name="Wich G."/>
            <person name="Leinfelder W."/>
            <person name="Boeck A."/>
        </authorList>
    </citation>
    <scope>NUCLEOTIDE SEQUENCE [GENOMIC DNA]</scope>
</reference>
<organism>
    <name type="scientific">Thermoproteus tenax</name>
    <dbReference type="NCBI Taxonomy" id="2271"/>
    <lineage>
        <taxon>Archaea</taxon>
        <taxon>Thermoproteota</taxon>
        <taxon>Thermoprotei</taxon>
        <taxon>Thermoproteales</taxon>
        <taxon>Thermoproteaceae</taxon>
        <taxon>Thermoproteus</taxon>
    </lineage>
</organism>
<sequence length="373" mass="38010">MPPRAWYLAAGFVIMCFNSLYQYTWNLLAPMIGRAMGLGVLAEAVGFTIYVIVSTVAQPAGGALADLRGPRGVGALSAVLSALGFIGAALAPGPALLYLAWGLGSAGEGVLYGIAFNLAVKWYQDKLGLATGLVSLGFGLGSAVANPLIASVGNYREATLAIGVVELLVLVPLSLLVDYPRGLSGVSPRRALLDARFWTLYASYALGAVPLLSLASSLHLLVGGGELVLLASLYPLLVGAARPLLGALADKWGPLKAIYLALAVSAAGTLAMLAGLDIVGVIAVGLTGGAIIILYLNLSSRIFGPKYATANNGLLYTAKAVGGTLGSAAFGYVYALGGARASLLFAAASALAAMAILAAQRGLERPLPRDPQL</sequence>
<comment type="miscellaneous">
    <text>No homology was detected between this sequence and those flanking other archaebacterial rRNA operons.</text>
</comment>
<name>Y38K_THETE</name>
<accession>P05715</accession>